<keyword id="KW-0240">DNA-directed RNA polymerase</keyword>
<keyword id="KW-0548">Nucleotidyltransferase</keyword>
<keyword id="KW-1185">Reference proteome</keyword>
<keyword id="KW-0804">Transcription</keyword>
<keyword id="KW-0808">Transferase</keyword>
<organism>
    <name type="scientific">Cellvibrio japonicus (strain Ueda107)</name>
    <name type="common">Pseudomonas fluorescens subsp. cellulosa</name>
    <dbReference type="NCBI Taxonomy" id="498211"/>
    <lineage>
        <taxon>Bacteria</taxon>
        <taxon>Pseudomonadati</taxon>
        <taxon>Pseudomonadota</taxon>
        <taxon>Gammaproteobacteria</taxon>
        <taxon>Cellvibrionales</taxon>
        <taxon>Cellvibrionaceae</taxon>
        <taxon>Cellvibrio</taxon>
    </lineage>
</organism>
<reference key="1">
    <citation type="journal article" date="2008" name="J. Bacteriol.">
        <title>Insights into plant cell wall degradation from the genome sequence of the soil bacterium Cellvibrio japonicus.</title>
        <authorList>
            <person name="DeBoy R.T."/>
            <person name="Mongodin E.F."/>
            <person name="Fouts D.E."/>
            <person name="Tailford L.E."/>
            <person name="Khouri H."/>
            <person name="Emerson J.B."/>
            <person name="Mohamoud Y."/>
            <person name="Watkins K."/>
            <person name="Henrissat B."/>
            <person name="Gilbert H.J."/>
            <person name="Nelson K.E."/>
        </authorList>
    </citation>
    <scope>NUCLEOTIDE SEQUENCE [LARGE SCALE GENOMIC DNA]</scope>
    <source>
        <strain>Ueda107</strain>
    </source>
</reference>
<gene>
    <name evidence="1" type="primary">rpoA</name>
    <name type="ordered locus">CJA_0724</name>
</gene>
<name>RPOA_CELJU</name>
<sequence length="328" mass="36234">MQTAVNEFLTPRHIDVSEITPTRARVVLEPLERGFGHTLGNALRRILLSSMAGCAIVEAEIDGVLHEYSAIEGVREDVIEILLNLKGVAVVMHGKDSTVLTLSKKGPGVVTAGDIQVDHDVEIKNPDHVIANITGNTELKMRLTIARGRGYQPADSRRRDDDESRAIGRLQLDASFSPVKRLAYSVESARVEQRTDLDKLVLDLETNGTIDPEEAIRRAATILQQQLAVFVDLEGEKQSAPEQKEEAIDPILLRPVDDLELTVRSANCLKAENIYYIGDLIQRTEVELLKTPNLGKKSLTEIKDVLASRGLSLGMRLENWPPASLKND</sequence>
<accession>B3PK62</accession>
<proteinExistence type="inferred from homology"/>
<evidence type="ECO:0000255" key="1">
    <source>
        <dbReference type="HAMAP-Rule" id="MF_00059"/>
    </source>
</evidence>
<dbReference type="EC" id="2.7.7.6" evidence="1"/>
<dbReference type="EMBL" id="CP000934">
    <property type="protein sequence ID" value="ACE86234.1"/>
    <property type="molecule type" value="Genomic_DNA"/>
</dbReference>
<dbReference type="RefSeq" id="WP_012486387.1">
    <property type="nucleotide sequence ID" value="NC_010995.1"/>
</dbReference>
<dbReference type="SMR" id="B3PK62"/>
<dbReference type="STRING" id="498211.CJA_0724"/>
<dbReference type="KEGG" id="cja:CJA_0724"/>
<dbReference type="eggNOG" id="COG0202">
    <property type="taxonomic scope" value="Bacteria"/>
</dbReference>
<dbReference type="HOGENOM" id="CLU_053084_0_0_6"/>
<dbReference type="OrthoDB" id="9805706at2"/>
<dbReference type="Proteomes" id="UP000001036">
    <property type="component" value="Chromosome"/>
</dbReference>
<dbReference type="GO" id="GO:0005737">
    <property type="term" value="C:cytoplasm"/>
    <property type="evidence" value="ECO:0007669"/>
    <property type="project" value="UniProtKB-ARBA"/>
</dbReference>
<dbReference type="GO" id="GO:0000428">
    <property type="term" value="C:DNA-directed RNA polymerase complex"/>
    <property type="evidence" value="ECO:0007669"/>
    <property type="project" value="UniProtKB-KW"/>
</dbReference>
<dbReference type="GO" id="GO:0003677">
    <property type="term" value="F:DNA binding"/>
    <property type="evidence" value="ECO:0007669"/>
    <property type="project" value="UniProtKB-UniRule"/>
</dbReference>
<dbReference type="GO" id="GO:0003899">
    <property type="term" value="F:DNA-directed RNA polymerase activity"/>
    <property type="evidence" value="ECO:0007669"/>
    <property type="project" value="UniProtKB-UniRule"/>
</dbReference>
<dbReference type="GO" id="GO:0046983">
    <property type="term" value="F:protein dimerization activity"/>
    <property type="evidence" value="ECO:0007669"/>
    <property type="project" value="InterPro"/>
</dbReference>
<dbReference type="GO" id="GO:0006351">
    <property type="term" value="P:DNA-templated transcription"/>
    <property type="evidence" value="ECO:0007669"/>
    <property type="project" value="UniProtKB-UniRule"/>
</dbReference>
<dbReference type="CDD" id="cd06928">
    <property type="entry name" value="RNAP_alpha_NTD"/>
    <property type="match status" value="1"/>
</dbReference>
<dbReference type="FunFam" id="1.10.150.20:FF:000001">
    <property type="entry name" value="DNA-directed RNA polymerase subunit alpha"/>
    <property type="match status" value="1"/>
</dbReference>
<dbReference type="FunFam" id="2.170.120.12:FF:000001">
    <property type="entry name" value="DNA-directed RNA polymerase subunit alpha"/>
    <property type="match status" value="1"/>
</dbReference>
<dbReference type="Gene3D" id="1.10.150.20">
    <property type="entry name" value="5' to 3' exonuclease, C-terminal subdomain"/>
    <property type="match status" value="1"/>
</dbReference>
<dbReference type="Gene3D" id="2.170.120.12">
    <property type="entry name" value="DNA-directed RNA polymerase, insert domain"/>
    <property type="match status" value="1"/>
</dbReference>
<dbReference type="Gene3D" id="3.30.1360.10">
    <property type="entry name" value="RNA polymerase, RBP11-like subunit"/>
    <property type="match status" value="1"/>
</dbReference>
<dbReference type="HAMAP" id="MF_00059">
    <property type="entry name" value="RNApol_bact_RpoA"/>
    <property type="match status" value="1"/>
</dbReference>
<dbReference type="InterPro" id="IPR011262">
    <property type="entry name" value="DNA-dir_RNA_pol_insert"/>
</dbReference>
<dbReference type="InterPro" id="IPR011263">
    <property type="entry name" value="DNA-dir_RNA_pol_RpoA/D/Rpb3"/>
</dbReference>
<dbReference type="InterPro" id="IPR011773">
    <property type="entry name" value="DNA-dir_RpoA"/>
</dbReference>
<dbReference type="InterPro" id="IPR036603">
    <property type="entry name" value="RBP11-like"/>
</dbReference>
<dbReference type="InterPro" id="IPR011260">
    <property type="entry name" value="RNAP_asu_C"/>
</dbReference>
<dbReference type="InterPro" id="IPR036643">
    <property type="entry name" value="RNApol_insert_sf"/>
</dbReference>
<dbReference type="NCBIfam" id="NF003513">
    <property type="entry name" value="PRK05182.1-2"/>
    <property type="match status" value="1"/>
</dbReference>
<dbReference type="NCBIfam" id="NF003519">
    <property type="entry name" value="PRK05182.2-5"/>
    <property type="match status" value="1"/>
</dbReference>
<dbReference type="NCBIfam" id="TIGR02027">
    <property type="entry name" value="rpoA"/>
    <property type="match status" value="1"/>
</dbReference>
<dbReference type="Pfam" id="PF01000">
    <property type="entry name" value="RNA_pol_A_bac"/>
    <property type="match status" value="1"/>
</dbReference>
<dbReference type="Pfam" id="PF03118">
    <property type="entry name" value="RNA_pol_A_CTD"/>
    <property type="match status" value="1"/>
</dbReference>
<dbReference type="Pfam" id="PF01193">
    <property type="entry name" value="RNA_pol_L"/>
    <property type="match status" value="1"/>
</dbReference>
<dbReference type="SMART" id="SM00662">
    <property type="entry name" value="RPOLD"/>
    <property type="match status" value="1"/>
</dbReference>
<dbReference type="SUPFAM" id="SSF47789">
    <property type="entry name" value="C-terminal domain of RNA polymerase alpha subunit"/>
    <property type="match status" value="1"/>
</dbReference>
<dbReference type="SUPFAM" id="SSF56553">
    <property type="entry name" value="Insert subdomain of RNA polymerase alpha subunit"/>
    <property type="match status" value="1"/>
</dbReference>
<dbReference type="SUPFAM" id="SSF55257">
    <property type="entry name" value="RBP11-like subunits of RNA polymerase"/>
    <property type="match status" value="1"/>
</dbReference>
<comment type="function">
    <text evidence="1">DNA-dependent RNA polymerase catalyzes the transcription of DNA into RNA using the four ribonucleoside triphosphates as substrates.</text>
</comment>
<comment type="catalytic activity">
    <reaction evidence="1">
        <text>RNA(n) + a ribonucleoside 5'-triphosphate = RNA(n+1) + diphosphate</text>
        <dbReference type="Rhea" id="RHEA:21248"/>
        <dbReference type="Rhea" id="RHEA-COMP:14527"/>
        <dbReference type="Rhea" id="RHEA-COMP:17342"/>
        <dbReference type="ChEBI" id="CHEBI:33019"/>
        <dbReference type="ChEBI" id="CHEBI:61557"/>
        <dbReference type="ChEBI" id="CHEBI:140395"/>
        <dbReference type="EC" id="2.7.7.6"/>
    </reaction>
</comment>
<comment type="subunit">
    <text evidence="1">Homodimer. The RNAP catalytic core consists of 2 alpha, 1 beta, 1 beta' and 1 omega subunit. When a sigma factor is associated with the core the holoenzyme is formed, which can initiate transcription.</text>
</comment>
<comment type="domain">
    <text evidence="1">The N-terminal domain is essential for RNAP assembly and basal transcription, whereas the C-terminal domain is involved in interaction with transcriptional regulators and with upstream promoter elements.</text>
</comment>
<comment type="similarity">
    <text evidence="1">Belongs to the RNA polymerase alpha chain family.</text>
</comment>
<feature type="chain" id="PRO_1000091931" description="DNA-directed RNA polymerase subunit alpha">
    <location>
        <begin position="1"/>
        <end position="328"/>
    </location>
</feature>
<feature type="region of interest" description="Alpha N-terminal domain (alpha-NTD)" evidence="1">
    <location>
        <begin position="1"/>
        <end position="234"/>
    </location>
</feature>
<feature type="region of interest" description="Alpha C-terminal domain (alpha-CTD)" evidence="1">
    <location>
        <begin position="248"/>
        <end position="328"/>
    </location>
</feature>
<protein>
    <recommendedName>
        <fullName evidence="1">DNA-directed RNA polymerase subunit alpha</fullName>
        <shortName evidence="1">RNAP subunit alpha</shortName>
        <ecNumber evidence="1">2.7.7.6</ecNumber>
    </recommendedName>
    <alternativeName>
        <fullName evidence="1">RNA polymerase subunit alpha</fullName>
    </alternativeName>
    <alternativeName>
        <fullName evidence="1">Transcriptase subunit alpha</fullName>
    </alternativeName>
</protein>